<name>NUSB_BACHK</name>
<gene>
    <name evidence="1" type="primary">nusB</name>
    <name type="ordered locus">BT9727_3924</name>
</gene>
<accession>Q6HDY3</accession>
<keyword id="KW-0694">RNA-binding</keyword>
<keyword id="KW-0804">Transcription</keyword>
<keyword id="KW-0889">Transcription antitermination</keyword>
<keyword id="KW-0805">Transcription regulation</keyword>
<organism>
    <name type="scientific">Bacillus thuringiensis subsp. konkukian (strain 97-27)</name>
    <dbReference type="NCBI Taxonomy" id="281309"/>
    <lineage>
        <taxon>Bacteria</taxon>
        <taxon>Bacillati</taxon>
        <taxon>Bacillota</taxon>
        <taxon>Bacilli</taxon>
        <taxon>Bacillales</taxon>
        <taxon>Bacillaceae</taxon>
        <taxon>Bacillus</taxon>
        <taxon>Bacillus cereus group</taxon>
    </lineage>
</organism>
<sequence>MKRRTARERAMQALYQMDITGELEPKVAVENTLDEGEETNEFLESLVVGFVENKEVIDEAIRQNLKKWKLERISIVDRSILRVAVYEMKYMEEIPHNVTINEAIEIAKTFGDEESRRFINGVLSNIKDTL</sequence>
<comment type="function">
    <text evidence="1">Involved in transcription antitermination. Required for transcription of ribosomal RNA (rRNA) genes. Binds specifically to the boxA antiterminator sequence of the ribosomal RNA (rrn) operons.</text>
</comment>
<comment type="similarity">
    <text evidence="1">Belongs to the NusB family.</text>
</comment>
<protein>
    <recommendedName>
        <fullName evidence="1">Transcription antitermination protein NusB</fullName>
    </recommendedName>
    <alternativeName>
        <fullName evidence="1">Antitermination factor NusB</fullName>
    </alternativeName>
</protein>
<reference key="1">
    <citation type="journal article" date="2006" name="J. Bacteriol.">
        <title>Pathogenomic sequence analysis of Bacillus cereus and Bacillus thuringiensis isolates closely related to Bacillus anthracis.</title>
        <authorList>
            <person name="Han C.S."/>
            <person name="Xie G."/>
            <person name="Challacombe J.F."/>
            <person name="Altherr M.R."/>
            <person name="Bhotika S.S."/>
            <person name="Bruce D."/>
            <person name="Campbell C.S."/>
            <person name="Campbell M.L."/>
            <person name="Chen J."/>
            <person name="Chertkov O."/>
            <person name="Cleland C."/>
            <person name="Dimitrijevic M."/>
            <person name="Doggett N.A."/>
            <person name="Fawcett J.J."/>
            <person name="Glavina T."/>
            <person name="Goodwin L.A."/>
            <person name="Hill K.K."/>
            <person name="Hitchcock P."/>
            <person name="Jackson P.J."/>
            <person name="Keim P."/>
            <person name="Kewalramani A.R."/>
            <person name="Longmire J."/>
            <person name="Lucas S."/>
            <person name="Malfatti S."/>
            <person name="McMurry K."/>
            <person name="Meincke L.J."/>
            <person name="Misra M."/>
            <person name="Moseman B.L."/>
            <person name="Mundt M."/>
            <person name="Munk A.C."/>
            <person name="Okinaka R.T."/>
            <person name="Parson-Quintana B."/>
            <person name="Reilly L.P."/>
            <person name="Richardson P."/>
            <person name="Robinson D.L."/>
            <person name="Rubin E."/>
            <person name="Saunders E."/>
            <person name="Tapia R."/>
            <person name="Tesmer J.G."/>
            <person name="Thayer N."/>
            <person name="Thompson L.S."/>
            <person name="Tice H."/>
            <person name="Ticknor L.O."/>
            <person name="Wills P.L."/>
            <person name="Brettin T.S."/>
            <person name="Gilna P."/>
        </authorList>
    </citation>
    <scope>NUCLEOTIDE SEQUENCE [LARGE SCALE GENOMIC DNA]</scope>
    <source>
        <strain>97-27</strain>
    </source>
</reference>
<feature type="chain" id="PRO_0000265485" description="Transcription antitermination protein NusB">
    <location>
        <begin position="1"/>
        <end position="130"/>
    </location>
</feature>
<proteinExistence type="inferred from homology"/>
<dbReference type="EMBL" id="AE017355">
    <property type="protein sequence ID" value="AAT60774.1"/>
    <property type="molecule type" value="Genomic_DNA"/>
</dbReference>
<dbReference type="RefSeq" id="WP_000830249.1">
    <property type="nucleotide sequence ID" value="NC_005957.1"/>
</dbReference>
<dbReference type="RefSeq" id="YP_038243.1">
    <property type="nucleotide sequence ID" value="NC_005957.1"/>
</dbReference>
<dbReference type="SMR" id="Q6HDY3"/>
<dbReference type="GeneID" id="93006920"/>
<dbReference type="KEGG" id="btk:BT9727_3924"/>
<dbReference type="PATRIC" id="fig|281309.8.peg.4187"/>
<dbReference type="HOGENOM" id="CLU_087843_3_3_9"/>
<dbReference type="Proteomes" id="UP000001301">
    <property type="component" value="Chromosome"/>
</dbReference>
<dbReference type="GO" id="GO:0005829">
    <property type="term" value="C:cytosol"/>
    <property type="evidence" value="ECO:0007669"/>
    <property type="project" value="TreeGrafter"/>
</dbReference>
<dbReference type="GO" id="GO:0003723">
    <property type="term" value="F:RNA binding"/>
    <property type="evidence" value="ECO:0007669"/>
    <property type="project" value="UniProtKB-UniRule"/>
</dbReference>
<dbReference type="GO" id="GO:0006353">
    <property type="term" value="P:DNA-templated transcription termination"/>
    <property type="evidence" value="ECO:0007669"/>
    <property type="project" value="UniProtKB-UniRule"/>
</dbReference>
<dbReference type="GO" id="GO:0031564">
    <property type="term" value="P:transcription antitermination"/>
    <property type="evidence" value="ECO:0007669"/>
    <property type="project" value="UniProtKB-KW"/>
</dbReference>
<dbReference type="CDD" id="cd00619">
    <property type="entry name" value="Terminator_NusB"/>
    <property type="match status" value="1"/>
</dbReference>
<dbReference type="FunFam" id="1.10.940.10:FF:000003">
    <property type="entry name" value="Transcription antitermination factor NusB"/>
    <property type="match status" value="1"/>
</dbReference>
<dbReference type="Gene3D" id="1.10.940.10">
    <property type="entry name" value="NusB-like"/>
    <property type="match status" value="1"/>
</dbReference>
<dbReference type="HAMAP" id="MF_00073">
    <property type="entry name" value="NusB"/>
    <property type="match status" value="1"/>
</dbReference>
<dbReference type="InterPro" id="IPR035926">
    <property type="entry name" value="NusB-like_sf"/>
</dbReference>
<dbReference type="InterPro" id="IPR011605">
    <property type="entry name" value="NusB_fam"/>
</dbReference>
<dbReference type="InterPro" id="IPR006027">
    <property type="entry name" value="NusB_RsmB_TIM44"/>
</dbReference>
<dbReference type="NCBIfam" id="TIGR01951">
    <property type="entry name" value="nusB"/>
    <property type="match status" value="1"/>
</dbReference>
<dbReference type="NCBIfam" id="NF001223">
    <property type="entry name" value="PRK00202.1-1"/>
    <property type="match status" value="1"/>
</dbReference>
<dbReference type="PANTHER" id="PTHR11078:SF3">
    <property type="entry name" value="ANTITERMINATION NUSB DOMAIN-CONTAINING PROTEIN"/>
    <property type="match status" value="1"/>
</dbReference>
<dbReference type="PANTHER" id="PTHR11078">
    <property type="entry name" value="N UTILIZATION SUBSTANCE PROTEIN B-RELATED"/>
    <property type="match status" value="1"/>
</dbReference>
<dbReference type="Pfam" id="PF01029">
    <property type="entry name" value="NusB"/>
    <property type="match status" value="1"/>
</dbReference>
<dbReference type="SUPFAM" id="SSF48013">
    <property type="entry name" value="NusB-like"/>
    <property type="match status" value="1"/>
</dbReference>
<evidence type="ECO:0000255" key="1">
    <source>
        <dbReference type="HAMAP-Rule" id="MF_00073"/>
    </source>
</evidence>